<comment type="function">
    <text evidence="1 10">Component of the BTR double Holliday Junction dissolution complex, which is involved in homologous recombination during meiotic double strand break in the germline (Probable). Releases the supercoiling and torsional tension of DNA introduced during the DNA replication and transcription by transiently cleaving and rejoining one strand of the DNA duplex. Introduces a single-strand break via transesterification at a target site in duplex DNA. The scissile phosphodiester is attacked by the catalytic tyrosine of the enzyme, resulting in the formation of a DNA-(5'-phosphotyrosyl)-enzyme intermediate and the expulsion of a 3'-OH DNA strand. The free DNA strand than undergoes passage around the unbroken strand thus removing DNA supercoils. Finally, in the religation step, the DNA 3'-OH attacks the covalent intermediate to expel the active-site tyrosine and restore the DNA phosphodiester backbone (By similarity).</text>
</comment>
<comment type="catalytic activity">
    <reaction evidence="5">
        <text>ATP-independent breakage of single-stranded DNA, followed by passage and rejoining.</text>
        <dbReference type="EC" id="5.6.2.1"/>
    </reaction>
</comment>
<comment type="subunit">
    <text evidence="7 10">Component of the BTR double Holliday Junction dissolution complex composed of at least him-6, top-3, rmh-1 and rmif-2, which is involved in double strand break repair in the germline (Probable). May interact with rmh-1 (PubMed:27011106).</text>
</comment>
<comment type="subcellular location">
    <subcellularLocation>
        <location evidence="8">Nucleus</location>
    </subcellularLocation>
    <text evidence="8">Localizes to nuclear foci throughout pachynema in meiotic prophase I during meiotic recombination (PubMed:34252074). Localization at nuclear foci is dependent on rmif-2 (PubMed:34252074).</text>
</comment>
<comment type="similarity">
    <text evidence="4 9">Belongs to the type IA topoisomerase family.</text>
</comment>
<dbReference type="EC" id="5.6.2.1" evidence="5"/>
<dbReference type="EMBL" id="AF057032">
    <property type="protein sequence ID" value="AAC13567.1"/>
    <property type="molecule type" value="mRNA"/>
</dbReference>
<dbReference type="EMBL" id="BX284603">
    <property type="protein sequence ID" value="CAB60518.2"/>
    <property type="molecule type" value="Genomic_DNA"/>
</dbReference>
<dbReference type="PIR" id="T43031">
    <property type="entry name" value="T43031"/>
</dbReference>
<dbReference type="RefSeq" id="NP_499558.1">
    <property type="nucleotide sequence ID" value="NM_067157.7"/>
</dbReference>
<dbReference type="SMR" id="O61660"/>
<dbReference type="BioGRID" id="41811">
    <property type="interactions" value="7"/>
</dbReference>
<dbReference type="ComplexPortal" id="CPX-7361">
    <property type="entry name" value="BTR double Holliday Junction dissolution complex"/>
</dbReference>
<dbReference type="FunCoup" id="O61660">
    <property type="interactions" value="2906"/>
</dbReference>
<dbReference type="STRING" id="6239.Y56A3A.27.1"/>
<dbReference type="PaxDb" id="6239-Y56A3A.27"/>
<dbReference type="PeptideAtlas" id="O61660"/>
<dbReference type="EnsemblMetazoa" id="Y56A3A.27.1">
    <property type="protein sequence ID" value="Y56A3A.27.1"/>
    <property type="gene ID" value="WBGene00006596"/>
</dbReference>
<dbReference type="GeneID" id="176631"/>
<dbReference type="KEGG" id="cel:CELE_Y56A3A.27"/>
<dbReference type="UCSC" id="Y56A3A.27.1">
    <property type="organism name" value="c. elegans"/>
</dbReference>
<dbReference type="AGR" id="WB:WBGene00006596"/>
<dbReference type="CTD" id="176631"/>
<dbReference type="WormBase" id="Y56A3A.27">
    <property type="protein sequence ID" value="CE28138"/>
    <property type="gene ID" value="WBGene00006596"/>
    <property type="gene designation" value="top-3A"/>
</dbReference>
<dbReference type="eggNOG" id="KOG1956">
    <property type="taxonomic scope" value="Eukaryota"/>
</dbReference>
<dbReference type="GeneTree" id="ENSGT00940000156701"/>
<dbReference type="HOGENOM" id="CLU_002929_1_2_1"/>
<dbReference type="InParanoid" id="O61660"/>
<dbReference type="OMA" id="MELAMGD"/>
<dbReference type="OrthoDB" id="430051at2759"/>
<dbReference type="PhylomeDB" id="O61660"/>
<dbReference type="BRENDA" id="5.6.2.1">
    <property type="organism ID" value="1045"/>
</dbReference>
<dbReference type="Reactome" id="R-CEL-5693607">
    <property type="pathway name" value="Processing of DNA double-strand break ends"/>
</dbReference>
<dbReference type="PRO" id="PR:O61660"/>
<dbReference type="Proteomes" id="UP000001940">
    <property type="component" value="Chromosome III"/>
</dbReference>
<dbReference type="Bgee" id="WBGene00006596">
    <property type="expression patterns" value="Expressed in gonad and 5 other cell types or tissues"/>
</dbReference>
<dbReference type="GO" id="GO:0005634">
    <property type="term" value="C:nucleus"/>
    <property type="evidence" value="ECO:0000314"/>
    <property type="project" value="UniProtKB"/>
</dbReference>
<dbReference type="GO" id="GO:0031422">
    <property type="term" value="C:RecQ family helicase-topoisomerase III complex"/>
    <property type="evidence" value="ECO:0000318"/>
    <property type="project" value="GO_Central"/>
</dbReference>
<dbReference type="GO" id="GO:0003677">
    <property type="term" value="F:DNA binding"/>
    <property type="evidence" value="ECO:0007669"/>
    <property type="project" value="UniProtKB-KW"/>
</dbReference>
<dbReference type="GO" id="GO:0003917">
    <property type="term" value="F:DNA topoisomerase type I (single strand cut, ATP-independent) activity"/>
    <property type="evidence" value="ECO:0000314"/>
    <property type="project" value="WormBase"/>
</dbReference>
<dbReference type="GO" id="GO:0008270">
    <property type="term" value="F:zinc ion binding"/>
    <property type="evidence" value="ECO:0007669"/>
    <property type="project" value="UniProtKB-KW"/>
</dbReference>
<dbReference type="GO" id="GO:0006310">
    <property type="term" value="P:DNA recombination"/>
    <property type="evidence" value="ECO:0000318"/>
    <property type="project" value="GO_Central"/>
</dbReference>
<dbReference type="GO" id="GO:0006281">
    <property type="term" value="P:DNA repair"/>
    <property type="evidence" value="ECO:0000318"/>
    <property type="project" value="GO_Central"/>
</dbReference>
<dbReference type="GO" id="GO:0006265">
    <property type="term" value="P:DNA topological change"/>
    <property type="evidence" value="ECO:0000314"/>
    <property type="project" value="WormBase"/>
</dbReference>
<dbReference type="CDD" id="cd00186">
    <property type="entry name" value="TOP1Ac"/>
    <property type="match status" value="1"/>
</dbReference>
<dbReference type="CDD" id="cd03362">
    <property type="entry name" value="TOPRIM_TopoIA_TopoIII"/>
    <property type="match status" value="1"/>
</dbReference>
<dbReference type="FunFam" id="1.10.290.10:FF:000001">
    <property type="entry name" value="DNA topoisomerase"/>
    <property type="match status" value="1"/>
</dbReference>
<dbReference type="FunFam" id="1.10.460.10:FF:000003">
    <property type="entry name" value="DNA topoisomerase"/>
    <property type="match status" value="1"/>
</dbReference>
<dbReference type="FunFam" id="3.40.50.140:FF:000003">
    <property type="entry name" value="DNA topoisomerase"/>
    <property type="match status" value="1"/>
</dbReference>
<dbReference type="Gene3D" id="3.40.50.140">
    <property type="match status" value="1"/>
</dbReference>
<dbReference type="Gene3D" id="1.10.460.10">
    <property type="entry name" value="Topoisomerase I, domain 2"/>
    <property type="match status" value="1"/>
</dbReference>
<dbReference type="Gene3D" id="2.70.20.10">
    <property type="entry name" value="Topoisomerase I, domain 3"/>
    <property type="match status" value="1"/>
</dbReference>
<dbReference type="Gene3D" id="1.10.290.10">
    <property type="entry name" value="Topoisomerase I, domain 4"/>
    <property type="match status" value="1"/>
</dbReference>
<dbReference type="InterPro" id="IPR000380">
    <property type="entry name" value="Topo_IA"/>
</dbReference>
<dbReference type="InterPro" id="IPR003601">
    <property type="entry name" value="Topo_IA_2"/>
</dbReference>
<dbReference type="InterPro" id="IPR023406">
    <property type="entry name" value="Topo_IA_AS"/>
</dbReference>
<dbReference type="InterPro" id="IPR013497">
    <property type="entry name" value="Topo_IA_cen"/>
</dbReference>
<dbReference type="InterPro" id="IPR013824">
    <property type="entry name" value="Topo_IA_cen_sub1"/>
</dbReference>
<dbReference type="InterPro" id="IPR013825">
    <property type="entry name" value="Topo_IA_cen_sub2"/>
</dbReference>
<dbReference type="InterPro" id="IPR013826">
    <property type="entry name" value="Topo_IA_cen_sub3"/>
</dbReference>
<dbReference type="InterPro" id="IPR023405">
    <property type="entry name" value="Topo_IA_core_domain"/>
</dbReference>
<dbReference type="InterPro" id="IPR003602">
    <property type="entry name" value="Topo_IA_DNA-bd_dom"/>
</dbReference>
<dbReference type="InterPro" id="IPR006171">
    <property type="entry name" value="TOPRIM_dom"/>
</dbReference>
<dbReference type="InterPro" id="IPR034144">
    <property type="entry name" value="TOPRIM_TopoIII"/>
</dbReference>
<dbReference type="InterPro" id="IPR010666">
    <property type="entry name" value="Znf_GRF"/>
</dbReference>
<dbReference type="PANTHER" id="PTHR11390:SF21">
    <property type="entry name" value="DNA TOPOISOMERASE 3-ALPHA"/>
    <property type="match status" value="1"/>
</dbReference>
<dbReference type="PANTHER" id="PTHR11390">
    <property type="entry name" value="PROKARYOTIC DNA TOPOISOMERASE"/>
    <property type="match status" value="1"/>
</dbReference>
<dbReference type="Pfam" id="PF01131">
    <property type="entry name" value="Topoisom_bac"/>
    <property type="match status" value="1"/>
</dbReference>
<dbReference type="Pfam" id="PF01751">
    <property type="entry name" value="Toprim"/>
    <property type="match status" value="1"/>
</dbReference>
<dbReference type="Pfam" id="PF06839">
    <property type="entry name" value="Zn_ribbon_GRF"/>
    <property type="match status" value="1"/>
</dbReference>
<dbReference type="PRINTS" id="PR00417">
    <property type="entry name" value="PRTPISMRASEI"/>
</dbReference>
<dbReference type="SMART" id="SM00437">
    <property type="entry name" value="TOP1Ac"/>
    <property type="match status" value="1"/>
</dbReference>
<dbReference type="SMART" id="SM00436">
    <property type="entry name" value="TOP1Bc"/>
    <property type="match status" value="1"/>
</dbReference>
<dbReference type="SMART" id="SM00493">
    <property type="entry name" value="TOPRIM"/>
    <property type="match status" value="1"/>
</dbReference>
<dbReference type="SUPFAM" id="SSF56712">
    <property type="entry name" value="Prokaryotic type I DNA topoisomerase"/>
    <property type="match status" value="1"/>
</dbReference>
<dbReference type="PROSITE" id="PS00396">
    <property type="entry name" value="TOPO_IA_1"/>
    <property type="match status" value="1"/>
</dbReference>
<dbReference type="PROSITE" id="PS52039">
    <property type="entry name" value="TOPO_IA_2"/>
    <property type="match status" value="1"/>
</dbReference>
<dbReference type="PROSITE" id="PS50880">
    <property type="entry name" value="TOPRIM"/>
    <property type="match status" value="1"/>
</dbReference>
<dbReference type="PROSITE" id="PS51999">
    <property type="entry name" value="ZF_GRF"/>
    <property type="match status" value="1"/>
</dbReference>
<organism>
    <name type="scientific">Caenorhabditis elegans</name>
    <dbReference type="NCBI Taxonomy" id="6239"/>
    <lineage>
        <taxon>Eukaryota</taxon>
        <taxon>Metazoa</taxon>
        <taxon>Ecdysozoa</taxon>
        <taxon>Nematoda</taxon>
        <taxon>Chromadorea</taxon>
        <taxon>Rhabditida</taxon>
        <taxon>Rhabditina</taxon>
        <taxon>Rhabditomorpha</taxon>
        <taxon>Rhabditoidea</taxon>
        <taxon>Rhabditidae</taxon>
        <taxon>Peloderinae</taxon>
        <taxon>Caenorhabditis</taxon>
    </lineage>
</organism>
<name>TOP3_CAEEL</name>
<accession>O61660</accession>
<accession>Q9U223</accession>
<feature type="chain" id="PRO_0000145194" description="DNA topoisomerase 3">
    <location>
        <begin position="1"/>
        <end position="759"/>
    </location>
</feature>
<feature type="domain" description="Toprim" evidence="2">
    <location>
        <begin position="3"/>
        <end position="147"/>
    </location>
</feature>
<feature type="domain" description="Topo IA-type catalytic" evidence="4">
    <location>
        <begin position="165"/>
        <end position="590"/>
    </location>
</feature>
<feature type="zinc finger region" description="GRF-type" evidence="3">
    <location>
        <begin position="716"/>
        <end position="759"/>
    </location>
</feature>
<feature type="region of interest" description="Disordered" evidence="6">
    <location>
        <begin position="609"/>
        <end position="715"/>
    </location>
</feature>
<feature type="compositionally biased region" description="Gly residues" evidence="6">
    <location>
        <begin position="614"/>
        <end position="639"/>
    </location>
</feature>
<feature type="compositionally biased region" description="Pro residues" evidence="6">
    <location>
        <begin position="640"/>
        <end position="649"/>
    </location>
</feature>
<feature type="active site" description="O-(5'-phospho-DNA)-tyrosine intermediate" evidence="4">
    <location>
        <position position="334"/>
    </location>
</feature>
<feature type="binding site" evidence="3">
    <location>
        <position position="716"/>
    </location>
    <ligand>
        <name>Zn(2+)</name>
        <dbReference type="ChEBI" id="CHEBI:29105"/>
    </ligand>
</feature>
<feature type="binding site" evidence="3">
    <location>
        <position position="718"/>
    </location>
    <ligand>
        <name>Zn(2+)</name>
        <dbReference type="ChEBI" id="CHEBI:29105"/>
    </ligand>
</feature>
<feature type="binding site" evidence="3">
    <location>
        <position position="743"/>
    </location>
    <ligand>
        <name>Zn(2+)</name>
        <dbReference type="ChEBI" id="CHEBI:29105"/>
    </ligand>
</feature>
<feature type="binding site" evidence="3">
    <location>
        <position position="753"/>
    </location>
    <ligand>
        <name>Zn(2+)</name>
        <dbReference type="ChEBI" id="CHEBI:29105"/>
    </ligand>
</feature>
<reference key="1">
    <citation type="journal article" date="2000" name="Nucleic Acids Res.">
        <title>Functional characterization of Caenorhabditis elegans DNA topoisomerase IIIalpha.</title>
        <authorList>
            <person name="Kim Y.-C."/>
            <person name="Lee J."/>
            <person name="Koo H.-S."/>
        </authorList>
    </citation>
    <scope>NUCLEOTIDE SEQUENCE [MRNA]</scope>
    <source>
        <strain>Bristol N2</strain>
    </source>
</reference>
<reference key="2">
    <citation type="journal article" date="1998" name="Science">
        <title>Genome sequence of the nematode C. elegans: a platform for investigating biology.</title>
        <authorList>
            <consortium name="The C. elegans sequencing consortium"/>
        </authorList>
    </citation>
    <scope>NUCLEOTIDE SEQUENCE [LARGE SCALE GENOMIC DNA]</scope>
    <source>
        <strain>Bristol N2</strain>
    </source>
</reference>
<reference key="3">
    <citation type="journal article" date="2016" name="PLoS Biol.">
        <title>Separable roles for a Caenorhabditis elegans RMI1 homolog in promoting and antagonizing meiotic crossovers ensure faithful chromosome inheritance.</title>
        <authorList>
            <person name="Jagut M."/>
            <person name="Hamminger P."/>
            <person name="Woglar A."/>
            <person name="Millonigg S."/>
            <person name="Paulin L."/>
            <person name="Mikl M."/>
            <person name="Dello Stritto M.R."/>
            <person name="Tang L."/>
            <person name="Habacher C."/>
            <person name="Tam A."/>
            <person name="Gallach M."/>
            <person name="von Haeseler A."/>
            <person name="Villeneuve A.M."/>
            <person name="Jantsch V."/>
        </authorList>
    </citation>
    <scope>INTERACTION WITH RMH-1</scope>
</reference>
<reference key="4">
    <citation type="journal article" date="2021" name="PLoS Genet.">
        <title>Caenorhabditis elegans RMI2 functional homolog-2 (RMIF-2) and RMI1 (RMH-1) have both overlapping and distinct meiotic functions within the BTR complex.</title>
        <authorList>
            <person name="Velkova M."/>
            <person name="Silva N."/>
            <person name="Dello Stritto M.R."/>
            <person name="Schleiffer A."/>
            <person name="Barraud P."/>
            <person name="Hartl M."/>
            <person name="Jantsch V."/>
        </authorList>
    </citation>
    <scope>FUNCTION</scope>
    <scope>IDENTIFICATION IN BTR COMPLEX</scope>
    <scope>SUBCELLULAR LOCATION</scope>
</reference>
<gene>
    <name evidence="11" type="primary">top-3A</name>
    <name evidence="11" type="ORF">Y56A3A.27</name>
</gene>
<evidence type="ECO:0000250" key="1"/>
<evidence type="ECO:0000255" key="2">
    <source>
        <dbReference type="PROSITE-ProRule" id="PRU00995"/>
    </source>
</evidence>
<evidence type="ECO:0000255" key="3">
    <source>
        <dbReference type="PROSITE-ProRule" id="PRU01343"/>
    </source>
</evidence>
<evidence type="ECO:0000255" key="4">
    <source>
        <dbReference type="PROSITE-ProRule" id="PRU01383"/>
    </source>
</evidence>
<evidence type="ECO:0000255" key="5">
    <source>
        <dbReference type="PROSITE-ProRule" id="PRU10131"/>
    </source>
</evidence>
<evidence type="ECO:0000256" key="6">
    <source>
        <dbReference type="SAM" id="MobiDB-lite"/>
    </source>
</evidence>
<evidence type="ECO:0000269" key="7">
    <source>
    </source>
</evidence>
<evidence type="ECO:0000269" key="8">
    <source>
    </source>
</evidence>
<evidence type="ECO:0000305" key="9"/>
<evidence type="ECO:0000305" key="10">
    <source>
    </source>
</evidence>
<evidence type="ECO:0000312" key="11">
    <source>
        <dbReference type="WormBase" id="Y56A3A.27"/>
    </source>
</evidence>
<protein>
    <recommendedName>
        <fullName>DNA topoisomerase 3</fullName>
        <ecNumber evidence="5">5.6.2.1</ecNumber>
    </recommendedName>
    <alternativeName>
        <fullName>DNA topoisomerase III</fullName>
    </alternativeName>
</protein>
<proteinExistence type="evidence at protein level"/>
<sequence length="759" mass="85438">MKRALFVAEKNDVAKGVAAILSNGTANRREGRSKFNKIYTLNTELFGQQTAISVTSVSGHMMNFQFHENMSNWQTASMVELFRAPVRHVVTPEMKLIEQTLREQAQRHDILVVWTDCDREGEAIGAEIVKVCRDSNRRLDIFRARFSEITKAAITRAARNLIRLDEKTVAAVDCRSELDLRIGSAFTRLQTLHLRNRFRDLLGQNDTSQVISYGSCQFPTLGFVTDRYKMIENFVSEPFWKLIVEHTRESHKVEFLWDRNRLFDRDTVDILHDECKETKEAHVEKVAKKPKSKWRPQALDTVELEKLGISKLRMSAKQTMQVAEKLYSKGFISYPRTETNKFPAGLNLTPLVQQQTQSNIWGDFANEVLQNGVNPRNGRKSDEAHPPIHPLKFTEKHQLQGDDWKVYELVVRHFLACVSQDAQGEETMVNLTVGTEKFHASGLRIRDMGYLKVYVYEKWGNRLLPTYTEGERFTDFELKIGDGKTQAPDFLTEADLISLMDKYGIGTDATHAEHIEKIKTREYIGVRPDGKLIPSFLGLALVDGYDDMGFAMSKPDLRANLEIGLKEICDGRRQKQEVLDEQIGKYRAIFVESERKIGVLSQSLQRYLDKNNQAGGGPGGPGGGGGPPRGPGGGGGGGPTGPPAPPKPPAKPRGRPPRKSISPAVKNGHDDPENDTIVTLSEVFGSMSNPKPARKPRAPRKSAAPKEQEEEEEVFCQCPEPMRAVTKVVQKEGPNKGKKFYTCSLPYTSSEKCNFFKWA</sequence>
<keyword id="KW-0238">DNA-binding</keyword>
<keyword id="KW-0413">Isomerase</keyword>
<keyword id="KW-0479">Metal-binding</keyword>
<keyword id="KW-0539">Nucleus</keyword>
<keyword id="KW-1185">Reference proteome</keyword>
<keyword id="KW-0799">Topoisomerase</keyword>
<keyword id="KW-0862">Zinc</keyword>
<keyword id="KW-0863">Zinc-finger</keyword>